<protein>
    <recommendedName>
        <fullName evidence="1">Phospho-N-acetylmuramoyl-pentapeptide-transferase</fullName>
        <ecNumber evidence="1">2.7.8.13</ecNumber>
    </recommendedName>
    <alternativeName>
        <fullName evidence="1">UDP-MurNAc-pentapeptide phosphotransferase</fullName>
    </alternativeName>
</protein>
<reference key="1">
    <citation type="journal article" date="2003" name="Nat. Biotechnol.">
        <title>The genome sequence of the entomopathogenic bacterium Photorhabdus luminescens.</title>
        <authorList>
            <person name="Duchaud E."/>
            <person name="Rusniok C."/>
            <person name="Frangeul L."/>
            <person name="Buchrieser C."/>
            <person name="Givaudan A."/>
            <person name="Taourit S."/>
            <person name="Bocs S."/>
            <person name="Boursaux-Eude C."/>
            <person name="Chandler M."/>
            <person name="Charles J.-F."/>
            <person name="Dassa E."/>
            <person name="Derose R."/>
            <person name="Derzelle S."/>
            <person name="Freyssinet G."/>
            <person name="Gaudriault S."/>
            <person name="Medigue C."/>
            <person name="Lanois A."/>
            <person name="Powell K."/>
            <person name="Siguier P."/>
            <person name="Vincent R."/>
            <person name="Wingate V."/>
            <person name="Zouine M."/>
            <person name="Glaser P."/>
            <person name="Boemare N."/>
            <person name="Danchin A."/>
            <person name="Kunst F."/>
        </authorList>
    </citation>
    <scope>NUCLEOTIDE SEQUENCE [LARGE SCALE GENOMIC DNA]</scope>
    <source>
        <strain>DSM 15139 / CIP 105565 / TT01</strain>
    </source>
</reference>
<keyword id="KW-0131">Cell cycle</keyword>
<keyword id="KW-0132">Cell division</keyword>
<keyword id="KW-0997">Cell inner membrane</keyword>
<keyword id="KW-1003">Cell membrane</keyword>
<keyword id="KW-0133">Cell shape</keyword>
<keyword id="KW-0961">Cell wall biogenesis/degradation</keyword>
<keyword id="KW-0460">Magnesium</keyword>
<keyword id="KW-0472">Membrane</keyword>
<keyword id="KW-0479">Metal-binding</keyword>
<keyword id="KW-0573">Peptidoglycan synthesis</keyword>
<keyword id="KW-1185">Reference proteome</keyword>
<keyword id="KW-0808">Transferase</keyword>
<keyword id="KW-0812">Transmembrane</keyword>
<keyword id="KW-1133">Transmembrane helix</keyword>
<dbReference type="EC" id="2.7.8.13" evidence="1"/>
<dbReference type="EMBL" id="BX571871">
    <property type="protein sequence ID" value="CAE16030.1"/>
    <property type="molecule type" value="Genomic_DNA"/>
</dbReference>
<dbReference type="RefSeq" id="WP_011147820.1">
    <property type="nucleotide sequence ID" value="NC_005126.1"/>
</dbReference>
<dbReference type="SMR" id="Q7N144"/>
<dbReference type="STRING" id="243265.plu3657"/>
<dbReference type="GeneID" id="88806418"/>
<dbReference type="KEGG" id="plu:plu3657"/>
<dbReference type="eggNOG" id="COG0472">
    <property type="taxonomic scope" value="Bacteria"/>
</dbReference>
<dbReference type="HOGENOM" id="CLU_023982_0_0_6"/>
<dbReference type="OrthoDB" id="9805475at2"/>
<dbReference type="UniPathway" id="UPA00219"/>
<dbReference type="Proteomes" id="UP000002514">
    <property type="component" value="Chromosome"/>
</dbReference>
<dbReference type="GO" id="GO:0005886">
    <property type="term" value="C:plasma membrane"/>
    <property type="evidence" value="ECO:0007669"/>
    <property type="project" value="UniProtKB-SubCell"/>
</dbReference>
<dbReference type="GO" id="GO:0046872">
    <property type="term" value="F:metal ion binding"/>
    <property type="evidence" value="ECO:0007669"/>
    <property type="project" value="UniProtKB-KW"/>
</dbReference>
<dbReference type="GO" id="GO:0008963">
    <property type="term" value="F:phospho-N-acetylmuramoyl-pentapeptide-transferase activity"/>
    <property type="evidence" value="ECO:0007669"/>
    <property type="project" value="UniProtKB-UniRule"/>
</dbReference>
<dbReference type="GO" id="GO:0051992">
    <property type="term" value="F:UDP-N-acetylmuramoyl-L-alanyl-D-glutamyl-meso-2,6-diaminopimelyl-D-alanyl-D-alanine:undecaprenyl-phosphate transferase activity"/>
    <property type="evidence" value="ECO:0007669"/>
    <property type="project" value="RHEA"/>
</dbReference>
<dbReference type="GO" id="GO:0051301">
    <property type="term" value="P:cell division"/>
    <property type="evidence" value="ECO:0007669"/>
    <property type="project" value="UniProtKB-KW"/>
</dbReference>
<dbReference type="GO" id="GO:0071555">
    <property type="term" value="P:cell wall organization"/>
    <property type="evidence" value="ECO:0007669"/>
    <property type="project" value="UniProtKB-KW"/>
</dbReference>
<dbReference type="GO" id="GO:0009252">
    <property type="term" value="P:peptidoglycan biosynthetic process"/>
    <property type="evidence" value="ECO:0007669"/>
    <property type="project" value="UniProtKB-UniRule"/>
</dbReference>
<dbReference type="GO" id="GO:0008360">
    <property type="term" value="P:regulation of cell shape"/>
    <property type="evidence" value="ECO:0007669"/>
    <property type="project" value="UniProtKB-KW"/>
</dbReference>
<dbReference type="CDD" id="cd06852">
    <property type="entry name" value="GT_MraY"/>
    <property type="match status" value="1"/>
</dbReference>
<dbReference type="HAMAP" id="MF_00038">
    <property type="entry name" value="MraY"/>
    <property type="match status" value="1"/>
</dbReference>
<dbReference type="InterPro" id="IPR000715">
    <property type="entry name" value="Glycosyl_transferase_4"/>
</dbReference>
<dbReference type="InterPro" id="IPR003524">
    <property type="entry name" value="PNAcMuramoyl-5peptid_Trfase"/>
</dbReference>
<dbReference type="InterPro" id="IPR018480">
    <property type="entry name" value="PNAcMuramoyl-5peptid_Trfase_CS"/>
</dbReference>
<dbReference type="NCBIfam" id="TIGR00445">
    <property type="entry name" value="mraY"/>
    <property type="match status" value="1"/>
</dbReference>
<dbReference type="PANTHER" id="PTHR22926">
    <property type="entry name" value="PHOSPHO-N-ACETYLMURAMOYL-PENTAPEPTIDE-TRANSFERASE"/>
    <property type="match status" value="1"/>
</dbReference>
<dbReference type="PANTHER" id="PTHR22926:SF5">
    <property type="entry name" value="PHOSPHO-N-ACETYLMURAMOYL-PENTAPEPTIDE-TRANSFERASE HOMOLOG"/>
    <property type="match status" value="1"/>
</dbReference>
<dbReference type="Pfam" id="PF00953">
    <property type="entry name" value="Glycos_transf_4"/>
    <property type="match status" value="1"/>
</dbReference>
<dbReference type="Pfam" id="PF10555">
    <property type="entry name" value="MraY_sig1"/>
    <property type="match status" value="1"/>
</dbReference>
<dbReference type="PROSITE" id="PS01347">
    <property type="entry name" value="MRAY_1"/>
    <property type="match status" value="1"/>
</dbReference>
<dbReference type="PROSITE" id="PS01348">
    <property type="entry name" value="MRAY_2"/>
    <property type="match status" value="1"/>
</dbReference>
<name>MRAY_PHOLL</name>
<proteinExistence type="inferred from homology"/>
<feature type="chain" id="PRO_0000108864" description="Phospho-N-acetylmuramoyl-pentapeptide-transferase">
    <location>
        <begin position="1"/>
        <end position="360"/>
    </location>
</feature>
<feature type="transmembrane region" description="Helical" evidence="1">
    <location>
        <begin position="27"/>
        <end position="47"/>
    </location>
</feature>
<feature type="transmembrane region" description="Helical" evidence="1">
    <location>
        <begin position="71"/>
        <end position="91"/>
    </location>
</feature>
<feature type="transmembrane region" description="Helical" evidence="1">
    <location>
        <begin position="94"/>
        <end position="114"/>
    </location>
</feature>
<feature type="transmembrane region" description="Helical" evidence="1">
    <location>
        <begin position="132"/>
        <end position="152"/>
    </location>
</feature>
<feature type="transmembrane region" description="Helical" evidence="1">
    <location>
        <begin position="168"/>
        <end position="188"/>
    </location>
</feature>
<feature type="transmembrane region" description="Helical" evidence="1">
    <location>
        <begin position="199"/>
        <end position="219"/>
    </location>
</feature>
<feature type="transmembrane region" description="Helical" evidence="1">
    <location>
        <begin position="236"/>
        <end position="256"/>
    </location>
</feature>
<feature type="transmembrane region" description="Helical" evidence="1">
    <location>
        <begin position="263"/>
        <end position="283"/>
    </location>
</feature>
<feature type="transmembrane region" description="Helical" evidence="1">
    <location>
        <begin position="288"/>
        <end position="308"/>
    </location>
</feature>
<feature type="transmembrane region" description="Helical" evidence="1">
    <location>
        <begin position="338"/>
        <end position="358"/>
    </location>
</feature>
<comment type="function">
    <text evidence="1">Catalyzes the initial step of the lipid cycle reactions in the biosynthesis of the cell wall peptidoglycan: transfers peptidoglycan precursor phospho-MurNAc-pentapeptide from UDP-MurNAc-pentapeptide onto the lipid carrier undecaprenyl phosphate, yielding undecaprenyl-pyrophosphoryl-MurNAc-pentapeptide, known as lipid I.</text>
</comment>
<comment type="catalytic activity">
    <reaction evidence="1">
        <text>UDP-N-acetyl-alpha-D-muramoyl-L-alanyl-gamma-D-glutamyl-meso-2,6-diaminopimeloyl-D-alanyl-D-alanine + di-trans,octa-cis-undecaprenyl phosphate = di-trans,octa-cis-undecaprenyl diphospho-N-acetyl-alpha-D-muramoyl-L-alanyl-D-glutamyl-meso-2,6-diaminopimeloyl-D-alanyl-D-alanine + UMP</text>
        <dbReference type="Rhea" id="RHEA:28386"/>
        <dbReference type="ChEBI" id="CHEBI:57865"/>
        <dbReference type="ChEBI" id="CHEBI:60392"/>
        <dbReference type="ChEBI" id="CHEBI:61386"/>
        <dbReference type="ChEBI" id="CHEBI:61387"/>
        <dbReference type="EC" id="2.7.8.13"/>
    </reaction>
</comment>
<comment type="cofactor">
    <cofactor evidence="1">
        <name>Mg(2+)</name>
        <dbReference type="ChEBI" id="CHEBI:18420"/>
    </cofactor>
</comment>
<comment type="pathway">
    <text evidence="1">Cell wall biogenesis; peptidoglycan biosynthesis.</text>
</comment>
<comment type="subcellular location">
    <subcellularLocation>
        <location evidence="1">Cell inner membrane</location>
        <topology evidence="1">Multi-pass membrane protein</topology>
    </subcellularLocation>
</comment>
<comment type="similarity">
    <text evidence="1">Belongs to the glycosyltransferase 4 family. MraY subfamily.</text>
</comment>
<evidence type="ECO:0000255" key="1">
    <source>
        <dbReference type="HAMAP-Rule" id="MF_00038"/>
    </source>
</evidence>
<accession>Q7N144</accession>
<gene>
    <name evidence="1" type="primary">mraY</name>
    <name type="ordered locus">plu3657</name>
</gene>
<sequence length="360" mass="39911">MLVWLAEYLVKYHSGFNVFSYLTFRAIVSLLTALAIALWMGPRMIAFLQKLQIGQVVRNDGPESHFSKRGTPTMGGLLILLSITISTLLWVRLNNPYVWCVLIVLIGYGIVGFVDDYRKVVRKDTKGLIARWKYFWQSVLALGVAFAMYSFGKDTPATQLVVPFFKDVMPQLGVLYILLTYFVIVGTSNAVNLTDGLDGLAIMPTVFVAAGFALVAWATGNVNFANYLHIPYLSHAGELVIVCTAIVGAGLGFLWFNTYPAQVFMGDVGSLALGGALGTIAVLLRQEFLLVIMGGVFVVETLSVILQVGSFKLRGQRIFRMAPIHHHYELKGWPEPRVIVRFWIISLMLVLIGLATLKVR</sequence>
<organism>
    <name type="scientific">Photorhabdus laumondii subsp. laumondii (strain DSM 15139 / CIP 105565 / TT01)</name>
    <name type="common">Photorhabdus luminescens subsp. laumondii</name>
    <dbReference type="NCBI Taxonomy" id="243265"/>
    <lineage>
        <taxon>Bacteria</taxon>
        <taxon>Pseudomonadati</taxon>
        <taxon>Pseudomonadota</taxon>
        <taxon>Gammaproteobacteria</taxon>
        <taxon>Enterobacterales</taxon>
        <taxon>Morganellaceae</taxon>
        <taxon>Photorhabdus</taxon>
    </lineage>
</organism>